<sequence length="227" mass="25404">MKMVAPWTRFYSHSCCLCCHVRTGTILLGIWYLIINAVVLLILLSALADPDQYHFSGSELGGEFEFMDDANMCIAIAISLLMILICAMATYGAYKQHAAWIIPFFCYQIFDFALNTLVAITVLVYPNSIQEYIRQLPPSFPYRDDIMSVNPTCLVLVILLFIGIILTFKGYLISCVWSCYRYINGRNSSDVLVYVTSNDTTVLLPPYDDATAVTGTAKEPPPPYVSA</sequence>
<feature type="chain" id="PRO_0000249724" description="Lysosomal-associated transmembrane protein 4B">
    <location>
        <begin position="1"/>
        <end position="227"/>
    </location>
</feature>
<feature type="transmembrane region" description="Helical" evidence="2">
    <location>
        <begin position="26"/>
        <end position="46"/>
    </location>
</feature>
<feature type="transmembrane region" description="Helical" evidence="2">
    <location>
        <begin position="72"/>
        <end position="92"/>
    </location>
</feature>
<feature type="transmembrane region" description="Helical" evidence="2">
    <location>
        <begin position="100"/>
        <end position="120"/>
    </location>
</feature>
<feature type="transmembrane region" description="Helical" evidence="2">
    <location>
        <begin position="153"/>
        <end position="173"/>
    </location>
</feature>
<feature type="region of interest" description="Required for NEDD4 interaction" evidence="1">
    <location>
        <begin position="205"/>
        <end position="222"/>
    </location>
</feature>
<comment type="function">
    <text evidence="1">Required for optimal lysosomal function. Blocks EGF-stimulated EGFR intraluminal sorting and degradation. Conversely by binding with the phosphatidylinositol 4,5-bisphosphate, regulates its PIP5K1C interaction, inhibits HGS ubiquitination and relieves LAPTM4B inhibition of EGFR degradation. Recruits SLC3A2 and SLC7A5 (the Leu transporter) to the lysosome, promoting entry of leucine and other essential amino acid (EAA) into the lysosome, stimulating activation of proton-transporting vacuolar (V)-ATPase protein pump (V-ATPase) and hence mTORC1 activation. Plays a role as negative regulator of TGFB1 production in regulatory T cells. Binds ceramide and facilitates its exit from late endosome in order to control cell death pathways.</text>
</comment>
<comment type="subunit">
    <text evidence="1">Homooligomer; upon reaching the lysosomes. Interacts with MCOLN1. Interacts with NEDD4; may play a role in the lysosomal sorting of LAPTM4B; enhances HGS association with NEDD4; mediates inhibition of EGFR degradation. Interacts with PIP5K1C; promotes SNX5 association with LAPTM4B; kinase activity of PIP5K1C is required; interaction is regulated by phosphatidylinositol 4,5-bisphosphate generated by PIP5K1C. Interacts with HGS; promotes HGS ubiquitination. Interacts with SNX5. Interacts with SLC3A2 and SLC7A5; recruits SLC3A2 and SLC7A5 to lysosomes to promote leucine uptake into these organelles and is required for mTORC1 activation. Interacts with LRRC32; decreases TGFB1 production in regulatory T cells. Interacts with BECN1; competes with EGFR for LAPTM4B binding; regulates EGFR activity. Interacts with EGFR; positively correlates with EGFR activation.</text>
</comment>
<comment type="subcellular location">
    <subcellularLocation>
        <location evidence="1">Endomembrane system</location>
        <topology evidence="1">Multi-pass membrane protein</topology>
    </subcellularLocation>
    <subcellularLocation>
        <location evidence="1">Late endosome membrane</location>
    </subcellularLocation>
    <subcellularLocation>
        <location evidence="1">Cell membrane</location>
    </subcellularLocation>
    <subcellularLocation>
        <location evidence="1">Cell projection</location>
    </subcellularLocation>
    <subcellularLocation>
        <location evidence="1">Lysosome membrane</location>
    </subcellularLocation>
    <subcellularLocation>
        <location evidence="1">Endosome membrane</location>
    </subcellularLocation>
    <subcellularLocation>
        <location evidence="1">Endosome</location>
        <location evidence="1">Multivesicular body membrane</location>
    </subcellularLocation>
    <subcellularLocation>
        <location evidence="1">Endosome</location>
        <location evidence="1">Multivesicular body lumen</location>
    </subcellularLocation>
</comment>
<comment type="PTM">
    <text evidence="1">Undergoes proteolytic cleavage following delivery to the lysosomes.</text>
</comment>
<comment type="PTM">
    <text evidence="1">Ubiquitinated by NEDD4.</text>
</comment>
<comment type="similarity">
    <text evidence="3">Belongs to the LAPTM4/LAPTM5 transporter family.</text>
</comment>
<proteinExistence type="evidence at transcript level"/>
<organism>
    <name type="scientific">Rattus norvegicus</name>
    <name type="common">Rat</name>
    <dbReference type="NCBI Taxonomy" id="10116"/>
    <lineage>
        <taxon>Eukaryota</taxon>
        <taxon>Metazoa</taxon>
        <taxon>Chordata</taxon>
        <taxon>Craniata</taxon>
        <taxon>Vertebrata</taxon>
        <taxon>Euteleostomi</taxon>
        <taxon>Mammalia</taxon>
        <taxon>Eutheria</taxon>
        <taxon>Euarchontoglires</taxon>
        <taxon>Glires</taxon>
        <taxon>Rodentia</taxon>
        <taxon>Myomorpha</taxon>
        <taxon>Muroidea</taxon>
        <taxon>Muridae</taxon>
        <taxon>Murinae</taxon>
        <taxon>Rattus</taxon>
    </lineage>
</organism>
<protein>
    <recommendedName>
        <fullName evidence="1">Lysosomal-associated transmembrane protein 4B</fullName>
    </recommendedName>
</protein>
<gene>
    <name evidence="4" type="primary">Laptm4b</name>
</gene>
<dbReference type="EMBL" id="BC086442">
    <property type="protein sequence ID" value="AAH86442.1"/>
    <property type="molecule type" value="mRNA"/>
</dbReference>
<dbReference type="RefSeq" id="NP_001013192.1">
    <property type="nucleotide sequence ID" value="NM_001013174.1"/>
</dbReference>
<dbReference type="FunCoup" id="Q5U1W4">
    <property type="interactions" value="1527"/>
</dbReference>
<dbReference type="STRING" id="10116.ENSRNOP00000008969"/>
<dbReference type="PhosphoSitePlus" id="Q5U1W4"/>
<dbReference type="PaxDb" id="10116-ENSRNOP00000008969"/>
<dbReference type="Ensembl" id="ENSRNOT00000008969.7">
    <property type="protein sequence ID" value="ENSRNOP00000008969.4"/>
    <property type="gene ID" value="ENSRNOG00000006766.7"/>
</dbReference>
<dbReference type="GeneID" id="315047"/>
<dbReference type="KEGG" id="rno:315047"/>
<dbReference type="UCSC" id="RGD:1311853">
    <property type="organism name" value="rat"/>
</dbReference>
<dbReference type="AGR" id="RGD:1311853"/>
<dbReference type="CTD" id="55353"/>
<dbReference type="RGD" id="1311853">
    <property type="gene designation" value="Laptm4b"/>
</dbReference>
<dbReference type="eggNOG" id="ENOG502QSAX">
    <property type="taxonomic scope" value="Eukaryota"/>
</dbReference>
<dbReference type="GeneTree" id="ENSGT00940000153446"/>
<dbReference type="HOGENOM" id="CLU_059239_1_0_1"/>
<dbReference type="InParanoid" id="Q5U1W4"/>
<dbReference type="OMA" id="LTDPGQY"/>
<dbReference type="OrthoDB" id="10002163at2759"/>
<dbReference type="PhylomeDB" id="Q5U1W4"/>
<dbReference type="TreeFam" id="TF330843"/>
<dbReference type="PRO" id="PR:Q5U1W4"/>
<dbReference type="Proteomes" id="UP000002494">
    <property type="component" value="Chromosome 7"/>
</dbReference>
<dbReference type="Bgee" id="ENSRNOG00000006766">
    <property type="expression patterns" value="Expressed in pancreas and 20 other cell types or tissues"/>
</dbReference>
<dbReference type="GO" id="GO:0042995">
    <property type="term" value="C:cell projection"/>
    <property type="evidence" value="ECO:0000250"/>
    <property type="project" value="UniProtKB"/>
</dbReference>
<dbReference type="GO" id="GO:0005769">
    <property type="term" value="C:early endosome"/>
    <property type="evidence" value="ECO:0000250"/>
    <property type="project" value="UniProtKB"/>
</dbReference>
<dbReference type="GO" id="GO:0005768">
    <property type="term" value="C:endosome"/>
    <property type="evidence" value="ECO:0000250"/>
    <property type="project" value="UniProtKB"/>
</dbReference>
<dbReference type="GO" id="GO:0031902">
    <property type="term" value="C:late endosome membrane"/>
    <property type="evidence" value="ECO:0000250"/>
    <property type="project" value="UniProtKB"/>
</dbReference>
<dbReference type="GO" id="GO:0005765">
    <property type="term" value="C:lysosomal membrane"/>
    <property type="evidence" value="ECO:0000250"/>
    <property type="project" value="UniProtKB"/>
</dbReference>
<dbReference type="GO" id="GO:0005764">
    <property type="term" value="C:lysosome"/>
    <property type="evidence" value="ECO:0000250"/>
    <property type="project" value="UniProtKB"/>
</dbReference>
<dbReference type="GO" id="GO:0032585">
    <property type="term" value="C:multivesicular body membrane"/>
    <property type="evidence" value="ECO:0000250"/>
    <property type="project" value="UniProtKB"/>
</dbReference>
<dbReference type="GO" id="GO:0097487">
    <property type="term" value="C:multivesicular body, internal vesicle"/>
    <property type="evidence" value="ECO:0000250"/>
    <property type="project" value="UniProtKB"/>
</dbReference>
<dbReference type="GO" id="GO:0005886">
    <property type="term" value="C:plasma membrane"/>
    <property type="evidence" value="ECO:0000250"/>
    <property type="project" value="UniProtKB"/>
</dbReference>
<dbReference type="GO" id="GO:0097001">
    <property type="term" value="F:ceramide binding"/>
    <property type="evidence" value="ECO:0000250"/>
    <property type="project" value="UniProtKB"/>
</dbReference>
<dbReference type="GO" id="GO:0019900">
    <property type="term" value="F:kinase binding"/>
    <property type="evidence" value="ECO:0000266"/>
    <property type="project" value="RGD"/>
</dbReference>
<dbReference type="GO" id="GO:1902936">
    <property type="term" value="F:phosphatidylinositol bisphosphate binding"/>
    <property type="evidence" value="ECO:0000250"/>
    <property type="project" value="UniProtKB"/>
</dbReference>
<dbReference type="GO" id="GO:0031625">
    <property type="term" value="F:ubiquitin protein ligase binding"/>
    <property type="evidence" value="ECO:0000266"/>
    <property type="project" value="RGD"/>
</dbReference>
<dbReference type="GO" id="GO:0007032">
    <property type="term" value="P:endosome organization"/>
    <property type="evidence" value="ECO:0000250"/>
    <property type="project" value="UniProtKB"/>
</dbReference>
<dbReference type="GO" id="GO:0032509">
    <property type="term" value="P:endosome transport via multivesicular body sorting pathway"/>
    <property type="evidence" value="ECO:0000250"/>
    <property type="project" value="UniProtKB"/>
</dbReference>
<dbReference type="GO" id="GO:1905166">
    <property type="term" value="P:negative regulation of lysosomal protein catabolic process"/>
    <property type="evidence" value="ECO:0000250"/>
    <property type="project" value="UniProtKB"/>
</dbReference>
<dbReference type="GO" id="GO:0032911">
    <property type="term" value="P:negative regulation of transforming growth factor beta1 production"/>
    <property type="evidence" value="ECO:0000250"/>
    <property type="project" value="UniProtKB"/>
</dbReference>
<dbReference type="GO" id="GO:0097213">
    <property type="term" value="P:regulation of lysosomal membrane permeability"/>
    <property type="evidence" value="ECO:0000250"/>
    <property type="project" value="UniProtKB"/>
</dbReference>
<dbReference type="GO" id="GO:1905671">
    <property type="term" value="P:regulation of lysosome organization"/>
    <property type="evidence" value="ECO:0000250"/>
    <property type="project" value="UniProtKB"/>
</dbReference>
<dbReference type="InterPro" id="IPR004687">
    <property type="entry name" value="LAPTM4/5"/>
</dbReference>
<dbReference type="InterPro" id="IPR051115">
    <property type="entry name" value="LAPTM_transporter"/>
</dbReference>
<dbReference type="PANTHER" id="PTHR12479">
    <property type="entry name" value="LYSOSOMAL-ASSOCIATED TRANSMEMBRANE PROTEIN"/>
    <property type="match status" value="1"/>
</dbReference>
<dbReference type="PANTHER" id="PTHR12479:SF6">
    <property type="entry name" value="LYSOSOMAL-ASSOCIATED TRANSMEMBRANE PROTEIN 4B"/>
    <property type="match status" value="1"/>
</dbReference>
<dbReference type="Pfam" id="PF03821">
    <property type="entry name" value="Mtp"/>
    <property type="match status" value="1"/>
</dbReference>
<name>LAP4B_RAT</name>
<evidence type="ECO:0000250" key="1">
    <source>
        <dbReference type="UniProtKB" id="Q86VI4"/>
    </source>
</evidence>
<evidence type="ECO:0000255" key="2"/>
<evidence type="ECO:0000305" key="3"/>
<evidence type="ECO:0000312" key="4">
    <source>
        <dbReference type="RGD" id="1311853"/>
    </source>
</evidence>
<accession>Q5U1W4</accession>
<keyword id="KW-1003">Cell membrane</keyword>
<keyword id="KW-0966">Cell projection</keyword>
<keyword id="KW-0967">Endosome</keyword>
<keyword id="KW-0458">Lysosome</keyword>
<keyword id="KW-0472">Membrane</keyword>
<keyword id="KW-1185">Reference proteome</keyword>
<keyword id="KW-0812">Transmembrane</keyword>
<keyword id="KW-1133">Transmembrane helix</keyword>
<keyword id="KW-0813">Transport</keyword>
<keyword id="KW-0832">Ubl conjugation</keyword>
<reference key="1">
    <citation type="journal article" date="2004" name="Genome Res.">
        <title>The status, quality, and expansion of the NIH full-length cDNA project: the Mammalian Gene Collection (MGC).</title>
        <authorList>
            <consortium name="The MGC Project Team"/>
        </authorList>
    </citation>
    <scope>NUCLEOTIDE SEQUENCE [LARGE SCALE MRNA]</scope>
    <source>
        <tissue>Ovary</tissue>
    </source>
</reference>